<gene>
    <name evidence="1" type="primary">mraY</name>
    <name type="ordered locus">C8J_0408</name>
</gene>
<accession>A8FKM0</accession>
<proteinExistence type="inferred from homology"/>
<sequence>MYYLSDLSHYAFFTYISVRAGFAFFIALCLSLFLMPKFITWAKAKNASQPIYEYAPETHKTKCHTPTMGGLIFISSAVIASLFCIKFDNIFAISALLCLILFCLIGLIDDLGKVLKKDNHSGLSPRMKLLAQIIAGLICILPLYFSSELSTELFIPFYKHPLFDMEIFAIVFWILVLISSSNAVNLTDGLDGLATVPSIFSLSTLGIFLYLSGNLNYSEYLLLPKIQGLGEVVIICAALIGALMGFLWYNCYPAQVFMGDSGSLALGGFIGFLAIISKNEILLLLIGFVFVLETVSVILQVGSFKIFNKRVFKMAPIHHHFEKVGWVENKIIVRFWMIALLSNLLALASIKLR</sequence>
<comment type="function">
    <text evidence="1">Catalyzes the initial step of the lipid cycle reactions in the biosynthesis of the cell wall peptidoglycan: transfers peptidoglycan precursor phospho-MurNAc-pentapeptide from UDP-MurNAc-pentapeptide onto the lipid carrier undecaprenyl phosphate, yielding undecaprenyl-pyrophosphoryl-MurNAc-pentapeptide, known as lipid I.</text>
</comment>
<comment type="catalytic activity">
    <reaction evidence="1">
        <text>UDP-N-acetyl-alpha-D-muramoyl-L-alanyl-gamma-D-glutamyl-meso-2,6-diaminopimeloyl-D-alanyl-D-alanine + di-trans,octa-cis-undecaprenyl phosphate = di-trans,octa-cis-undecaprenyl diphospho-N-acetyl-alpha-D-muramoyl-L-alanyl-D-glutamyl-meso-2,6-diaminopimeloyl-D-alanyl-D-alanine + UMP</text>
        <dbReference type="Rhea" id="RHEA:28386"/>
        <dbReference type="ChEBI" id="CHEBI:57865"/>
        <dbReference type="ChEBI" id="CHEBI:60392"/>
        <dbReference type="ChEBI" id="CHEBI:61386"/>
        <dbReference type="ChEBI" id="CHEBI:61387"/>
        <dbReference type="EC" id="2.7.8.13"/>
    </reaction>
</comment>
<comment type="cofactor">
    <cofactor evidence="1">
        <name>Mg(2+)</name>
        <dbReference type="ChEBI" id="CHEBI:18420"/>
    </cofactor>
</comment>
<comment type="pathway">
    <text evidence="1">Cell wall biogenesis; peptidoglycan biosynthesis.</text>
</comment>
<comment type="subcellular location">
    <subcellularLocation>
        <location evidence="1">Cell inner membrane</location>
        <topology evidence="1">Multi-pass membrane protein</topology>
    </subcellularLocation>
</comment>
<comment type="similarity">
    <text evidence="1">Belongs to the glycosyltransferase 4 family. MraY subfamily.</text>
</comment>
<feature type="chain" id="PRO_1000071047" description="Phospho-N-acetylmuramoyl-pentapeptide-transferase">
    <location>
        <begin position="1"/>
        <end position="353"/>
    </location>
</feature>
<feature type="transmembrane region" description="Helical" evidence="1">
    <location>
        <begin position="22"/>
        <end position="42"/>
    </location>
</feature>
<feature type="transmembrane region" description="Helical" evidence="1">
    <location>
        <begin position="65"/>
        <end position="85"/>
    </location>
</feature>
<feature type="transmembrane region" description="Helical" evidence="1">
    <location>
        <begin position="88"/>
        <end position="108"/>
    </location>
</feature>
<feature type="transmembrane region" description="Helical" evidence="1">
    <location>
        <begin position="129"/>
        <end position="149"/>
    </location>
</feature>
<feature type="transmembrane region" description="Helical" evidence="1">
    <location>
        <begin position="161"/>
        <end position="181"/>
    </location>
</feature>
<feature type="transmembrane region" description="Helical" evidence="1">
    <location>
        <begin position="192"/>
        <end position="212"/>
    </location>
</feature>
<feature type="transmembrane region" description="Helical" evidence="1">
    <location>
        <begin position="228"/>
        <end position="248"/>
    </location>
</feature>
<feature type="transmembrane region" description="Helical" evidence="1">
    <location>
        <begin position="256"/>
        <end position="276"/>
    </location>
</feature>
<feature type="transmembrane region" description="Helical" evidence="1">
    <location>
        <begin position="281"/>
        <end position="301"/>
    </location>
</feature>
<feature type="transmembrane region" description="Helical" evidence="1">
    <location>
        <begin position="330"/>
        <end position="350"/>
    </location>
</feature>
<name>MRAY_CAMJ8</name>
<organism>
    <name type="scientific">Campylobacter jejuni subsp. jejuni serotype O:6 (strain 81116 / NCTC 11828)</name>
    <dbReference type="NCBI Taxonomy" id="407148"/>
    <lineage>
        <taxon>Bacteria</taxon>
        <taxon>Pseudomonadati</taxon>
        <taxon>Campylobacterota</taxon>
        <taxon>Epsilonproteobacteria</taxon>
        <taxon>Campylobacterales</taxon>
        <taxon>Campylobacteraceae</taxon>
        <taxon>Campylobacter</taxon>
    </lineage>
</organism>
<dbReference type="EC" id="2.7.8.13" evidence="1"/>
<dbReference type="EMBL" id="CP000814">
    <property type="protein sequence ID" value="ABV52007.1"/>
    <property type="molecule type" value="Genomic_DNA"/>
</dbReference>
<dbReference type="RefSeq" id="WP_002867005.1">
    <property type="nucleotide sequence ID" value="NC_009839.1"/>
</dbReference>
<dbReference type="SMR" id="A8FKM0"/>
<dbReference type="KEGG" id="cju:C8J_0408"/>
<dbReference type="HOGENOM" id="CLU_023982_0_0_7"/>
<dbReference type="UniPathway" id="UPA00219"/>
<dbReference type="GO" id="GO:0005886">
    <property type="term" value="C:plasma membrane"/>
    <property type="evidence" value="ECO:0007669"/>
    <property type="project" value="UniProtKB-SubCell"/>
</dbReference>
<dbReference type="GO" id="GO:0046872">
    <property type="term" value="F:metal ion binding"/>
    <property type="evidence" value="ECO:0007669"/>
    <property type="project" value="UniProtKB-KW"/>
</dbReference>
<dbReference type="GO" id="GO:0008963">
    <property type="term" value="F:phospho-N-acetylmuramoyl-pentapeptide-transferase activity"/>
    <property type="evidence" value="ECO:0007669"/>
    <property type="project" value="UniProtKB-UniRule"/>
</dbReference>
<dbReference type="GO" id="GO:0051992">
    <property type="term" value="F:UDP-N-acetylmuramoyl-L-alanyl-D-glutamyl-meso-2,6-diaminopimelyl-D-alanyl-D-alanine:undecaprenyl-phosphate transferase activity"/>
    <property type="evidence" value="ECO:0007669"/>
    <property type="project" value="RHEA"/>
</dbReference>
<dbReference type="GO" id="GO:0051301">
    <property type="term" value="P:cell division"/>
    <property type="evidence" value="ECO:0007669"/>
    <property type="project" value="UniProtKB-KW"/>
</dbReference>
<dbReference type="GO" id="GO:0071555">
    <property type="term" value="P:cell wall organization"/>
    <property type="evidence" value="ECO:0007669"/>
    <property type="project" value="UniProtKB-KW"/>
</dbReference>
<dbReference type="GO" id="GO:0009252">
    <property type="term" value="P:peptidoglycan biosynthetic process"/>
    <property type="evidence" value="ECO:0007669"/>
    <property type="project" value="UniProtKB-UniRule"/>
</dbReference>
<dbReference type="GO" id="GO:0008360">
    <property type="term" value="P:regulation of cell shape"/>
    <property type="evidence" value="ECO:0007669"/>
    <property type="project" value="UniProtKB-KW"/>
</dbReference>
<dbReference type="CDD" id="cd06852">
    <property type="entry name" value="GT_MraY"/>
    <property type="match status" value="1"/>
</dbReference>
<dbReference type="HAMAP" id="MF_00038">
    <property type="entry name" value="MraY"/>
    <property type="match status" value="1"/>
</dbReference>
<dbReference type="InterPro" id="IPR000715">
    <property type="entry name" value="Glycosyl_transferase_4"/>
</dbReference>
<dbReference type="InterPro" id="IPR003524">
    <property type="entry name" value="PNAcMuramoyl-5peptid_Trfase"/>
</dbReference>
<dbReference type="InterPro" id="IPR018480">
    <property type="entry name" value="PNAcMuramoyl-5peptid_Trfase_CS"/>
</dbReference>
<dbReference type="NCBIfam" id="TIGR00445">
    <property type="entry name" value="mraY"/>
    <property type="match status" value="1"/>
</dbReference>
<dbReference type="PANTHER" id="PTHR22926">
    <property type="entry name" value="PHOSPHO-N-ACETYLMURAMOYL-PENTAPEPTIDE-TRANSFERASE"/>
    <property type="match status" value="1"/>
</dbReference>
<dbReference type="PANTHER" id="PTHR22926:SF5">
    <property type="entry name" value="PHOSPHO-N-ACETYLMURAMOYL-PENTAPEPTIDE-TRANSFERASE HOMOLOG"/>
    <property type="match status" value="1"/>
</dbReference>
<dbReference type="Pfam" id="PF00953">
    <property type="entry name" value="Glycos_transf_4"/>
    <property type="match status" value="1"/>
</dbReference>
<dbReference type="PROSITE" id="PS01347">
    <property type="entry name" value="MRAY_1"/>
    <property type="match status" value="1"/>
</dbReference>
<dbReference type="PROSITE" id="PS01348">
    <property type="entry name" value="MRAY_2"/>
    <property type="match status" value="1"/>
</dbReference>
<evidence type="ECO:0000255" key="1">
    <source>
        <dbReference type="HAMAP-Rule" id="MF_00038"/>
    </source>
</evidence>
<reference key="1">
    <citation type="journal article" date="2007" name="J. Bacteriol.">
        <title>The complete genome sequence of Campylobacter jejuni strain 81116 (NCTC11828).</title>
        <authorList>
            <person name="Pearson B.M."/>
            <person name="Gaskin D.J.H."/>
            <person name="Segers R.P.A.M."/>
            <person name="Wells J.M."/>
            <person name="Nuijten P.J.M."/>
            <person name="van Vliet A.H.M."/>
        </authorList>
    </citation>
    <scope>NUCLEOTIDE SEQUENCE [LARGE SCALE GENOMIC DNA]</scope>
    <source>
        <strain>81116 / NCTC 11828</strain>
    </source>
</reference>
<protein>
    <recommendedName>
        <fullName evidence="1">Phospho-N-acetylmuramoyl-pentapeptide-transferase</fullName>
        <ecNumber evidence="1">2.7.8.13</ecNumber>
    </recommendedName>
    <alternativeName>
        <fullName evidence="1">UDP-MurNAc-pentapeptide phosphotransferase</fullName>
    </alternativeName>
</protein>
<keyword id="KW-0131">Cell cycle</keyword>
<keyword id="KW-0132">Cell division</keyword>
<keyword id="KW-0997">Cell inner membrane</keyword>
<keyword id="KW-1003">Cell membrane</keyword>
<keyword id="KW-0133">Cell shape</keyword>
<keyword id="KW-0961">Cell wall biogenesis/degradation</keyword>
<keyword id="KW-0460">Magnesium</keyword>
<keyword id="KW-0472">Membrane</keyword>
<keyword id="KW-0479">Metal-binding</keyword>
<keyword id="KW-0573">Peptidoglycan synthesis</keyword>
<keyword id="KW-0808">Transferase</keyword>
<keyword id="KW-0812">Transmembrane</keyword>
<keyword id="KW-1133">Transmembrane helix</keyword>